<gene>
    <name evidence="38 40" type="primary">Irgm1</name>
    <name type="synonym">Ifi1</name>
    <name type="synonym">Iigp3</name>
    <name type="synonym">Irgm</name>
</gene>
<keyword id="KW-0025">Alternative splicing</keyword>
<keyword id="KW-0072">Autophagy</keyword>
<keyword id="KW-1003">Cell membrane</keyword>
<keyword id="KW-0966">Cell projection</keyword>
<keyword id="KW-0968">Cytoplasmic vesicle</keyword>
<keyword id="KW-0967">Endosome</keyword>
<keyword id="KW-0333">Golgi apparatus</keyword>
<keyword id="KW-0342">GTP-binding</keyword>
<keyword id="KW-0378">Hydrolase</keyword>
<keyword id="KW-0391">Immunity</keyword>
<keyword id="KW-0399">Innate immunity</keyword>
<keyword id="KW-1017">Isopeptide bond</keyword>
<keyword id="KW-0551">Lipid droplet</keyword>
<keyword id="KW-0446">Lipid-binding</keyword>
<keyword id="KW-0449">Lipoprotein</keyword>
<keyword id="KW-0458">Lysosome</keyword>
<keyword id="KW-0472">Membrane</keyword>
<keyword id="KW-0496">Mitochondrion</keyword>
<keyword id="KW-0547">Nucleotide-binding</keyword>
<keyword id="KW-0564">Palmitate</keyword>
<keyword id="KW-0597">Phosphoprotein</keyword>
<keyword id="KW-1185">Reference proteome</keyword>
<keyword id="KW-0832">Ubl conjugation</keyword>
<protein>
    <recommendedName>
        <fullName evidence="39">Immunity-related GTPase family M protein 1</fullName>
        <ecNumber evidence="15">3.6.5.-</ecNumber>
    </recommendedName>
    <alternativeName>
        <fullName>Interferon-inducible GTPase 3</fullName>
    </alternativeName>
    <alternativeName>
        <fullName evidence="38">Interferon-inducible protein 1</fullName>
    </alternativeName>
    <alternativeName>
        <fullName evidence="36">LPS-stimulated RAW 264.7 macrophage protein 47</fullName>
        <shortName evidence="36">LRG-47</shortName>
    </alternativeName>
</protein>
<accession>Q60766</accession>
<accession>Q3TJ73</accession>
<proteinExistence type="evidence at protein level"/>
<sequence>MKPSHSSCEAAPLLPNMAETHYAPLSSAFPFVTSYQTGSSRLPEVSRSTERALREGKLLELVYGIKETVATLSQIPVSIFVTGDSGNGMSSFINALRVIGHDEDASAPTGVVRTTKTRTEYSSSHFPNVVLWDLPGLGATAQTVEDYVEEMKFSTCDLFIIIASEQFSSNHVKLSKIIQSMGKRFYIVWTKLDRDLSTSVLSEVRLLQNIQENIRENLQKEKVKYPPVFLVSSLDPLLYDFPKLRDTLHKDLSNIRCCEPLKTLYGTYEKIVGDKVAVWKQRIANESLKNSLGVRDDDNMGECLKVYRLIFGVDDESVQQVAQSMGTVVMEYKDNMKSQNFYTLRREDWKLRLMTCAIVNAFFRLLRFLPCVCCCLRRLRHKRMLFLVAQDTKNILEKILRDSIFPPQI</sequence>
<organism>
    <name type="scientific">Mus musculus</name>
    <name type="common">Mouse</name>
    <dbReference type="NCBI Taxonomy" id="10090"/>
    <lineage>
        <taxon>Eukaryota</taxon>
        <taxon>Metazoa</taxon>
        <taxon>Chordata</taxon>
        <taxon>Craniata</taxon>
        <taxon>Vertebrata</taxon>
        <taxon>Euteleostomi</taxon>
        <taxon>Mammalia</taxon>
        <taxon>Eutheria</taxon>
        <taxon>Euarchontoglires</taxon>
        <taxon>Glires</taxon>
        <taxon>Rodentia</taxon>
        <taxon>Myomorpha</taxon>
        <taxon>Muroidea</taxon>
        <taxon>Muridae</taxon>
        <taxon>Murinae</taxon>
        <taxon>Mus</taxon>
        <taxon>Mus</taxon>
    </lineage>
</organism>
<evidence type="ECO:0000250" key="1">
    <source>
        <dbReference type="UniProtKB" id="A1A4Y4"/>
    </source>
</evidence>
<evidence type="ECO:0000250" key="2">
    <source>
        <dbReference type="UniProtKB" id="Q9QZ85"/>
    </source>
</evidence>
<evidence type="ECO:0000255" key="3">
    <source>
        <dbReference type="PROSITE-ProRule" id="PRU01053"/>
    </source>
</evidence>
<evidence type="ECO:0000269" key="4">
    <source>
    </source>
</evidence>
<evidence type="ECO:0000269" key="5">
    <source>
    </source>
</evidence>
<evidence type="ECO:0000269" key="6">
    <source>
    </source>
</evidence>
<evidence type="ECO:0000269" key="7">
    <source>
    </source>
</evidence>
<evidence type="ECO:0000269" key="8">
    <source>
    </source>
</evidence>
<evidence type="ECO:0000269" key="9">
    <source>
    </source>
</evidence>
<evidence type="ECO:0000269" key="10">
    <source>
    </source>
</evidence>
<evidence type="ECO:0000269" key="11">
    <source>
    </source>
</evidence>
<evidence type="ECO:0000269" key="12">
    <source>
    </source>
</evidence>
<evidence type="ECO:0000269" key="13">
    <source>
    </source>
</evidence>
<evidence type="ECO:0000269" key="14">
    <source>
    </source>
</evidence>
<evidence type="ECO:0000269" key="15">
    <source>
    </source>
</evidence>
<evidence type="ECO:0000269" key="16">
    <source>
    </source>
</evidence>
<evidence type="ECO:0000269" key="17">
    <source>
    </source>
</evidence>
<evidence type="ECO:0000269" key="18">
    <source>
    </source>
</evidence>
<evidence type="ECO:0000269" key="19">
    <source>
    </source>
</evidence>
<evidence type="ECO:0000269" key="20">
    <source>
    </source>
</evidence>
<evidence type="ECO:0000269" key="21">
    <source>
    </source>
</evidence>
<evidence type="ECO:0000269" key="22">
    <source>
    </source>
</evidence>
<evidence type="ECO:0000269" key="23">
    <source>
    </source>
</evidence>
<evidence type="ECO:0000269" key="24">
    <source>
    </source>
</evidence>
<evidence type="ECO:0000269" key="25">
    <source>
    </source>
</evidence>
<evidence type="ECO:0000269" key="26">
    <source>
    </source>
</evidence>
<evidence type="ECO:0000269" key="27">
    <source>
    </source>
</evidence>
<evidence type="ECO:0000269" key="28">
    <source>
    </source>
</evidence>
<evidence type="ECO:0000269" key="29">
    <source>
    </source>
</evidence>
<evidence type="ECO:0000269" key="30">
    <source>
    </source>
</evidence>
<evidence type="ECO:0000269" key="31">
    <source>
    </source>
</evidence>
<evidence type="ECO:0000269" key="32">
    <source>
    </source>
</evidence>
<evidence type="ECO:0000269" key="33">
    <source>
    </source>
</evidence>
<evidence type="ECO:0000269" key="34">
    <source>
    </source>
</evidence>
<evidence type="ECO:0000269" key="35">
    <source>
    </source>
</evidence>
<evidence type="ECO:0000303" key="36">
    <source>
    </source>
</evidence>
<evidence type="ECO:0000303" key="37">
    <source>
    </source>
</evidence>
<evidence type="ECO:0000303" key="38">
    <source>
    </source>
</evidence>
<evidence type="ECO:0000305" key="39"/>
<evidence type="ECO:0000312" key="40">
    <source>
        <dbReference type="MGI" id="MGI:107567"/>
    </source>
</evidence>
<evidence type="ECO:0007744" key="41">
    <source>
    </source>
</evidence>
<feature type="chain" id="PRO_0000325750" description="Immunity-related GTPase family M protein 1">
    <location>
        <begin position="1"/>
        <end position="409"/>
    </location>
</feature>
<feature type="domain" description="IRG-type G" evidence="3">
    <location>
        <begin position="75"/>
        <end position="251"/>
    </location>
</feature>
<feature type="region of interest" description="Alpha-K amphipathic helix" evidence="7">
    <location>
        <begin position="350"/>
        <end position="374"/>
    </location>
</feature>
<feature type="binding site" evidence="2">
    <location>
        <begin position="84"/>
        <end position="91"/>
    </location>
    <ligand>
        <name>GTP</name>
        <dbReference type="ChEBI" id="CHEBI:37565"/>
    </ligand>
</feature>
<feature type="binding site" evidence="2">
    <location>
        <begin position="109"/>
        <end position="113"/>
    </location>
    <ligand>
        <name>GTP</name>
        <dbReference type="ChEBI" id="CHEBI:37565"/>
    </ligand>
</feature>
<feature type="binding site" evidence="2">
    <location>
        <begin position="191"/>
        <end position="193"/>
    </location>
    <ligand>
        <name>GTP</name>
        <dbReference type="ChEBI" id="CHEBI:37565"/>
    </ligand>
</feature>
<feature type="binding site" evidence="2">
    <location>
        <begin position="232"/>
        <end position="234"/>
    </location>
    <ligand>
        <name>GTP</name>
        <dbReference type="ChEBI" id="CHEBI:37565"/>
    </ligand>
</feature>
<feature type="modified residue" description="Phosphoserine" evidence="41">
    <location>
        <position position="202"/>
    </location>
</feature>
<feature type="cross-link" description="Glycyl lysine isopeptide (Lys-Gly) (interchain with G-Cter in ubiquitin)" evidence="33">
    <location>
        <position position="270"/>
    </location>
</feature>
<feature type="splice variant" id="VSP_032384" description="In isoform 2." evidence="37">
    <location>
        <begin position="1"/>
        <end position="16"/>
    </location>
</feature>
<feature type="mutagenesis site" description="Does not affect palmitoylation." evidence="22">
    <original>C</original>
    <variation>A</variation>
    <location>
        <position position="8"/>
    </location>
</feature>
<feature type="mutagenesis site" description="Loss of targeting to plasma membrane and phagosomes." evidence="7">
    <original>S</original>
    <variation>N</variation>
    <location>
        <position position="90"/>
    </location>
</feature>
<feature type="mutagenesis site" description="Does not affect palmitoylation." evidence="22">
    <original>CC</original>
    <variation>AA</variation>
    <location>
        <begin position="257"/>
        <end position="258"/>
    </location>
</feature>
<feature type="mutagenesis site" description="Abolished ubiquitination by the DCX(WDR77) complex." evidence="33">
    <original>K</original>
    <variation>A</variation>
    <location>
        <position position="270"/>
    </location>
</feature>
<feature type="mutagenesis site" description="Does not affect ubiquitination by the DCX(WDR77) complex." evidence="33">
    <original>K</original>
    <variation>A</variation>
    <location>
        <position position="275"/>
    </location>
</feature>
<feature type="mutagenesis site" description="Abolished lipid-binding and subsequent recruitment to phagosome membranes, leading to impaired innate immunity." evidence="15">
    <original>KLRLMTC</original>
    <variation>ALALATA</variation>
    <location>
        <begin position="350"/>
        <end position="356"/>
    </location>
</feature>
<feature type="mutagenesis site" description="No effect on subcellular location." evidence="17">
    <original>C</original>
    <variation>A</variation>
    <location>
        <position position="356"/>
    </location>
</feature>
<feature type="mutagenesis site" description="No effect on subcellular location." evidence="17">
    <original>I</original>
    <variation>A</variation>
    <location>
        <position position="358"/>
    </location>
</feature>
<feature type="mutagenesis site" description="No effect on subcellular location." evidence="17">
    <original>V</original>
    <variation>A</variation>
    <location>
        <position position="359"/>
    </location>
</feature>
<feature type="mutagenesis site" description="No effect on subcellular location. Abolishes Golgi and lysosomal localization; when associated with A-364." evidence="17">
    <original>N</original>
    <variation>A</variation>
    <location>
        <position position="360"/>
    </location>
</feature>
<feature type="mutagenesis site" description="Abolished lipid-binding and subsequent recruitment to phagosome membranes, leading to impaired innate immunity." evidence="15">
    <original>FFRLLR</original>
    <variation>EFRLLE</variation>
    <location>
        <begin position="362"/>
        <end position="367"/>
    </location>
</feature>
<feature type="mutagenesis site" description="No effect on subcellular location." evidence="17">
    <original>F</original>
    <variation>A</variation>
    <location>
        <position position="362"/>
    </location>
</feature>
<feature type="mutagenesis site" description="Decreased lipid-binding." evidence="15">
    <original>F</original>
    <variation>E</variation>
    <location>
        <position position="362"/>
    </location>
</feature>
<feature type="mutagenesis site" description="Disrupts amphipathicity and abolishes Golgi localization; when associated with Glu-367." evidence="17">
    <original>F</original>
    <variation>EF</variation>
    <location>
        <position position="362"/>
    </location>
</feature>
<feature type="mutagenesis site" description="No effect on subcellular location." evidence="17">
    <original>F</original>
    <variation>A</variation>
    <location>
        <position position="363"/>
    </location>
</feature>
<feature type="mutagenesis site" description="No effect on subcellular location. Abolishes Golgi and lysosomal localization; when associated with A-360 or A-367." evidence="17">
    <original>R</original>
    <variation>A</variation>
    <location>
        <position position="364"/>
    </location>
</feature>
<feature type="mutagenesis site" description="No effect on subcellular location." evidence="17">
    <original>L</original>
    <variation>A</variation>
    <location>
        <position position="365"/>
    </location>
</feature>
<feature type="mutagenesis site" description="No effect on subcellular location." evidence="17">
    <original>L</original>
    <variation>A</variation>
    <location>
        <position position="366"/>
    </location>
</feature>
<feature type="mutagenesis site" description="No effect on subcellular location. Abolishes Golgi and lysosomal localization; when associated with A-364." evidence="17">
    <original>R</original>
    <variation>A</variation>
    <location>
        <position position="367"/>
    </location>
</feature>
<feature type="mutagenesis site" description="Disrupts amphipathicity and abolishes Golgi localization; when associated with Glu-362." evidence="17">
    <original>R</original>
    <variation>ER</variation>
    <location>
        <position position="367"/>
    </location>
</feature>
<feature type="mutagenesis site" description="Abolished palmitoylation and localization to membranes." evidence="22">
    <original>CVCCC</original>
    <variation>AVAAA</variation>
    <location>
        <begin position="371"/>
        <end position="375"/>
    </location>
</feature>
<feature type="mutagenesis site" description="Does not affect ubiquitination by the DCX(WDR77) complex." evidence="33">
    <original>K</original>
    <variation>A</variation>
    <location>
        <position position="398"/>
    </location>
</feature>
<feature type="sequence conflict" description="In Ref. 2; BAE39622." evidence="39" ref="2">
    <original>M</original>
    <variation>V</variation>
    <location>
        <position position="151"/>
    </location>
</feature>
<dbReference type="EC" id="3.6.5.-" evidence="15"/>
<dbReference type="EMBL" id="U19119">
    <property type="protein sequence ID" value="AAB48942.1"/>
    <property type="molecule type" value="mRNA"/>
</dbReference>
<dbReference type="EMBL" id="AK002545">
    <property type="protein sequence ID" value="BAB22176.1"/>
    <property type="molecule type" value="mRNA"/>
</dbReference>
<dbReference type="EMBL" id="AK167558">
    <property type="protein sequence ID" value="BAE39622.1"/>
    <property type="molecule type" value="mRNA"/>
</dbReference>
<dbReference type="EMBL" id="AK171743">
    <property type="protein sequence ID" value="BAE42645.1"/>
    <property type="molecule type" value="mRNA"/>
</dbReference>
<dbReference type="EMBL" id="AL645849">
    <property type="status" value="NOT_ANNOTATED_CDS"/>
    <property type="molecule type" value="Genomic_DNA"/>
</dbReference>
<dbReference type="EMBL" id="BC145957">
    <property type="protein sequence ID" value="AAI45958.1"/>
    <property type="molecule type" value="mRNA"/>
</dbReference>
<dbReference type="CCDS" id="CCDS24588.1">
    <molecule id="Q60766-1"/>
</dbReference>
<dbReference type="CCDS" id="CCDS88149.1">
    <molecule id="Q60766-2"/>
</dbReference>
<dbReference type="RefSeq" id="NP_001342686.1">
    <molecule id="Q60766-2"/>
    <property type="nucleotide sequence ID" value="NM_001355757.1"/>
</dbReference>
<dbReference type="RefSeq" id="NP_032352.1">
    <molecule id="Q60766-1"/>
    <property type="nucleotide sequence ID" value="NM_008326.2"/>
</dbReference>
<dbReference type="RefSeq" id="XP_011247066.1">
    <molecule id="Q60766-2"/>
    <property type="nucleotide sequence ID" value="XM_011248764.3"/>
</dbReference>
<dbReference type="RefSeq" id="XP_030101456.1">
    <molecule id="Q60766-2"/>
    <property type="nucleotide sequence ID" value="XM_030245596.2"/>
</dbReference>
<dbReference type="SMR" id="Q60766"/>
<dbReference type="BioGRID" id="200520">
    <property type="interactions" value="6"/>
</dbReference>
<dbReference type="FunCoup" id="Q60766">
    <property type="interactions" value="87"/>
</dbReference>
<dbReference type="IntAct" id="Q60766">
    <property type="interactions" value="1"/>
</dbReference>
<dbReference type="MINT" id="Q60766"/>
<dbReference type="STRING" id="10090.ENSMUSP00000050446"/>
<dbReference type="ChEMBL" id="CHEMBL5169158"/>
<dbReference type="GlyGen" id="Q60766">
    <property type="glycosylation" value="1 site, 1 O-linked glycan (1 site)"/>
</dbReference>
<dbReference type="iPTMnet" id="Q60766"/>
<dbReference type="PhosphoSitePlus" id="Q60766"/>
<dbReference type="SwissPalm" id="Q60766"/>
<dbReference type="jPOST" id="Q60766"/>
<dbReference type="PaxDb" id="10090-ENSMUSP00000050446"/>
<dbReference type="PeptideAtlas" id="Q60766"/>
<dbReference type="ProteomicsDB" id="268995">
    <molecule id="Q60766-1"/>
</dbReference>
<dbReference type="ProteomicsDB" id="268996">
    <molecule id="Q60766-2"/>
</dbReference>
<dbReference type="Pumba" id="Q60766"/>
<dbReference type="DNASU" id="15944"/>
<dbReference type="Ensembl" id="ENSMUST00000049519.4">
    <molecule id="Q60766-1"/>
    <property type="protein sequence ID" value="ENSMUSP00000050446.4"/>
    <property type="gene ID" value="ENSMUSG00000046879.8"/>
</dbReference>
<dbReference type="Ensembl" id="ENSMUST00000097271.4">
    <molecule id="Q60766-2"/>
    <property type="protein sequence ID" value="ENSMUSP00000094870.4"/>
    <property type="gene ID" value="ENSMUSG00000046879.8"/>
</dbReference>
<dbReference type="GeneID" id="15944"/>
<dbReference type="KEGG" id="mmu:15944"/>
<dbReference type="UCSC" id="uc007ipg.1">
    <molecule id="Q60766-1"/>
    <property type="organism name" value="mouse"/>
</dbReference>
<dbReference type="AGR" id="MGI:107567"/>
<dbReference type="CTD" id="15944"/>
<dbReference type="MGI" id="MGI:107567">
    <property type="gene designation" value="Irgm1"/>
</dbReference>
<dbReference type="VEuPathDB" id="HostDB:ENSMUSG00000046879"/>
<dbReference type="eggNOG" id="ENOG502QS9R">
    <property type="taxonomic scope" value="Eukaryota"/>
</dbReference>
<dbReference type="GeneTree" id="ENSGT00950000183007"/>
<dbReference type="InParanoid" id="Q60766"/>
<dbReference type="OMA" id="YLRVWKH"/>
<dbReference type="OrthoDB" id="422720at2759"/>
<dbReference type="PhylomeDB" id="Q60766"/>
<dbReference type="TreeFam" id="TF331897"/>
<dbReference type="BioGRID-ORCS" id="15944">
    <property type="hits" value="2 hits in 78 CRISPR screens"/>
</dbReference>
<dbReference type="ChiTaRS" id="Irgm1">
    <property type="organism name" value="mouse"/>
</dbReference>
<dbReference type="PRO" id="PR:Q60766"/>
<dbReference type="Proteomes" id="UP000000589">
    <property type="component" value="Chromosome 11"/>
</dbReference>
<dbReference type="RNAct" id="Q60766">
    <property type="molecule type" value="protein"/>
</dbReference>
<dbReference type="Bgee" id="ENSMUSG00000046879">
    <property type="expression patterns" value="Expressed in submandibular gland and 198 other cell types or tissues"/>
</dbReference>
<dbReference type="ExpressionAtlas" id="Q60766">
    <property type="expression patterns" value="baseline and differential"/>
</dbReference>
<dbReference type="GO" id="GO:0044754">
    <property type="term" value="C:autolysosome"/>
    <property type="evidence" value="ECO:0000314"/>
    <property type="project" value="UniProtKB"/>
</dbReference>
<dbReference type="GO" id="GO:0005776">
    <property type="term" value="C:autophagosome"/>
    <property type="evidence" value="ECO:0000314"/>
    <property type="project" value="UniProtKB"/>
</dbReference>
<dbReference type="GO" id="GO:0000421">
    <property type="term" value="C:autophagosome membrane"/>
    <property type="evidence" value="ECO:0007669"/>
    <property type="project" value="UniProtKB-SubCell"/>
</dbReference>
<dbReference type="GO" id="GO:0042995">
    <property type="term" value="C:cell projection"/>
    <property type="evidence" value="ECO:0007669"/>
    <property type="project" value="UniProtKB-KW"/>
</dbReference>
<dbReference type="GO" id="GO:0005783">
    <property type="term" value="C:endoplasmic reticulum"/>
    <property type="evidence" value="ECO:0000304"/>
    <property type="project" value="MGI"/>
</dbReference>
<dbReference type="GO" id="GO:0000139">
    <property type="term" value="C:Golgi membrane"/>
    <property type="evidence" value="ECO:0000314"/>
    <property type="project" value="UniProtKB"/>
</dbReference>
<dbReference type="GO" id="GO:0005770">
    <property type="term" value="C:late endosome"/>
    <property type="evidence" value="ECO:0000314"/>
    <property type="project" value="UniProtKB"/>
</dbReference>
<dbReference type="GO" id="GO:0031902">
    <property type="term" value="C:late endosome membrane"/>
    <property type="evidence" value="ECO:0007669"/>
    <property type="project" value="UniProtKB-SubCell"/>
</dbReference>
<dbReference type="GO" id="GO:0005811">
    <property type="term" value="C:lipid droplet"/>
    <property type="evidence" value="ECO:0007669"/>
    <property type="project" value="UniProtKB-SubCell"/>
</dbReference>
<dbReference type="GO" id="GO:0005765">
    <property type="term" value="C:lysosomal membrane"/>
    <property type="evidence" value="ECO:0000314"/>
    <property type="project" value="UniProtKB"/>
</dbReference>
<dbReference type="GO" id="GO:0005764">
    <property type="term" value="C:lysosome"/>
    <property type="evidence" value="ECO:0000314"/>
    <property type="project" value="UniProtKB"/>
</dbReference>
<dbReference type="GO" id="GO:0031966">
    <property type="term" value="C:mitochondrial membrane"/>
    <property type="evidence" value="ECO:0000314"/>
    <property type="project" value="UniProtKB"/>
</dbReference>
<dbReference type="GO" id="GO:0001891">
    <property type="term" value="C:phagocytic cup"/>
    <property type="evidence" value="ECO:0007669"/>
    <property type="project" value="UniProtKB-SubCell"/>
</dbReference>
<dbReference type="GO" id="GO:0045335">
    <property type="term" value="C:phagocytic vesicle"/>
    <property type="evidence" value="ECO:0000314"/>
    <property type="project" value="MGI"/>
</dbReference>
<dbReference type="GO" id="GO:0030670">
    <property type="term" value="C:phagocytic vesicle membrane"/>
    <property type="evidence" value="ECO:0007669"/>
    <property type="project" value="UniProtKB-SubCell"/>
</dbReference>
<dbReference type="GO" id="GO:1901612">
    <property type="term" value="F:cardiolipin binding"/>
    <property type="evidence" value="ECO:0000314"/>
    <property type="project" value="UniProtKB"/>
</dbReference>
<dbReference type="GO" id="GO:0005525">
    <property type="term" value="F:GTP binding"/>
    <property type="evidence" value="ECO:0007669"/>
    <property type="project" value="UniProtKB-KW"/>
</dbReference>
<dbReference type="GO" id="GO:0003924">
    <property type="term" value="F:GTPase activity"/>
    <property type="evidence" value="ECO:0000314"/>
    <property type="project" value="UniProtKB"/>
</dbReference>
<dbReference type="GO" id="GO:0005547">
    <property type="term" value="F:phosphatidylinositol-3,4,5-trisphosphate binding"/>
    <property type="evidence" value="ECO:0000314"/>
    <property type="project" value="UniProtKB"/>
</dbReference>
<dbReference type="GO" id="GO:0043325">
    <property type="term" value="F:phosphatidylinositol-3,4-bisphosphate binding"/>
    <property type="evidence" value="ECO:0000314"/>
    <property type="project" value="UniProtKB"/>
</dbReference>
<dbReference type="GO" id="GO:0000045">
    <property type="term" value="P:autophagosome assembly"/>
    <property type="evidence" value="ECO:0000314"/>
    <property type="project" value="UniProtKB"/>
</dbReference>
<dbReference type="GO" id="GO:0097352">
    <property type="term" value="P:autophagosome maturation"/>
    <property type="evidence" value="ECO:0000314"/>
    <property type="project" value="UniProtKB"/>
</dbReference>
<dbReference type="GO" id="GO:0071346">
    <property type="term" value="P:cellular response to type II interferon"/>
    <property type="evidence" value="ECO:0000314"/>
    <property type="project" value="MGI"/>
</dbReference>
<dbReference type="GO" id="GO:0006952">
    <property type="term" value="P:defense response"/>
    <property type="evidence" value="ECO:0000315"/>
    <property type="project" value="MGI"/>
</dbReference>
<dbReference type="GO" id="GO:0042742">
    <property type="term" value="P:defense response to bacterium"/>
    <property type="evidence" value="ECO:0000314"/>
    <property type="project" value="UniProtKB"/>
</dbReference>
<dbReference type="GO" id="GO:0045087">
    <property type="term" value="P:innate immune response"/>
    <property type="evidence" value="ECO:0000314"/>
    <property type="project" value="UniProtKB"/>
</dbReference>
<dbReference type="GO" id="GO:0050687">
    <property type="term" value="P:negative regulation of defense response to virus"/>
    <property type="evidence" value="ECO:0000315"/>
    <property type="project" value="UniProtKB"/>
</dbReference>
<dbReference type="GO" id="GO:1902034">
    <property type="term" value="P:negative regulation of hematopoietic stem cell proliferation"/>
    <property type="evidence" value="ECO:0000315"/>
    <property type="project" value="UniProtKB"/>
</dbReference>
<dbReference type="GO" id="GO:0050728">
    <property type="term" value="P:negative regulation of inflammatory response"/>
    <property type="evidence" value="ECO:0000315"/>
    <property type="project" value="UniProtKB"/>
</dbReference>
<dbReference type="GO" id="GO:1900226">
    <property type="term" value="P:negative regulation of NLRP3 inflammasome complex assembly"/>
    <property type="evidence" value="ECO:0000314"/>
    <property type="project" value="UniProtKB"/>
</dbReference>
<dbReference type="GO" id="GO:0032480">
    <property type="term" value="P:negative regulation of type I interferon production"/>
    <property type="evidence" value="ECO:0000315"/>
    <property type="project" value="UniProtKB"/>
</dbReference>
<dbReference type="GO" id="GO:0032689">
    <property type="term" value="P:negative regulation of type II interferon production"/>
    <property type="evidence" value="ECO:0000315"/>
    <property type="project" value="UniProtKB"/>
</dbReference>
<dbReference type="GO" id="GO:1901098">
    <property type="term" value="P:positive regulation of autophagosome maturation"/>
    <property type="evidence" value="ECO:0000314"/>
    <property type="project" value="UniProtKB"/>
</dbReference>
<dbReference type="GO" id="GO:0010508">
    <property type="term" value="P:positive regulation of autophagy"/>
    <property type="evidence" value="ECO:0000314"/>
    <property type="project" value="UniProtKB"/>
</dbReference>
<dbReference type="GO" id="GO:2000563">
    <property type="term" value="P:positive regulation of CD4-positive, alpha-beta T cell proliferation"/>
    <property type="evidence" value="ECO:0000315"/>
    <property type="project" value="UniProtKB"/>
</dbReference>
<dbReference type="GO" id="GO:0043032">
    <property type="term" value="P:positive regulation of macrophage activation"/>
    <property type="evidence" value="ECO:0000315"/>
    <property type="project" value="UniProtKB"/>
</dbReference>
<dbReference type="GO" id="GO:1901526">
    <property type="term" value="P:positive regulation of mitophagy"/>
    <property type="evidence" value="ECO:0000315"/>
    <property type="project" value="UniProtKB"/>
</dbReference>
<dbReference type="GO" id="GO:0060335">
    <property type="term" value="P:positive regulation of type II interferon-mediated signaling pathway"/>
    <property type="evidence" value="ECO:0000315"/>
    <property type="project" value="UniProtKB"/>
</dbReference>
<dbReference type="GO" id="GO:0090140">
    <property type="term" value="P:regulation of mitochondrial fission"/>
    <property type="evidence" value="ECO:0000314"/>
    <property type="project" value="UniProtKB"/>
</dbReference>
<dbReference type="GO" id="GO:0009617">
    <property type="term" value="P:response to bacterium"/>
    <property type="evidence" value="ECO:0000270"/>
    <property type="project" value="MGI"/>
</dbReference>
<dbReference type="CDD" id="cd04104">
    <property type="entry name" value="p47_IIGP_like"/>
    <property type="match status" value="1"/>
</dbReference>
<dbReference type="FunFam" id="3.40.50.300:FF:000541">
    <property type="entry name" value="Immunity related GTPase M"/>
    <property type="match status" value="1"/>
</dbReference>
<dbReference type="Gene3D" id="3.40.50.300">
    <property type="entry name" value="P-loop containing nucleotide triphosphate hydrolases"/>
    <property type="match status" value="1"/>
</dbReference>
<dbReference type="InterPro" id="IPR030385">
    <property type="entry name" value="G_IRG_dom"/>
</dbReference>
<dbReference type="InterPro" id="IPR007743">
    <property type="entry name" value="Immunity-related_GTPase-like"/>
</dbReference>
<dbReference type="InterPro" id="IPR051515">
    <property type="entry name" value="IRG"/>
</dbReference>
<dbReference type="InterPro" id="IPR027417">
    <property type="entry name" value="P-loop_NTPase"/>
</dbReference>
<dbReference type="PANTHER" id="PTHR32341:SF9">
    <property type="entry name" value="IMMUNITY-RELATED GTPASE FAMILY M PROTEIN"/>
    <property type="match status" value="1"/>
</dbReference>
<dbReference type="PANTHER" id="PTHR32341">
    <property type="entry name" value="INTERFERON-INDUCIBLE GTPASE"/>
    <property type="match status" value="1"/>
</dbReference>
<dbReference type="Pfam" id="PF05049">
    <property type="entry name" value="IIGP"/>
    <property type="match status" value="1"/>
</dbReference>
<dbReference type="SUPFAM" id="SSF52540">
    <property type="entry name" value="P-loop containing nucleoside triphosphate hydrolases"/>
    <property type="match status" value="1"/>
</dbReference>
<dbReference type="PROSITE" id="PS51716">
    <property type="entry name" value="G_IRG"/>
    <property type="match status" value="1"/>
</dbReference>
<name>IRGM1_MOUSE</name>
<comment type="function">
    <text evidence="1 4 5 6 8 9 10 11 12 13 14 15 16 18 19 20 22 23 24 25 28 29 30 31 32">Immunity-related GTPase that plays important roles in innate immunity and inflammatory response (PubMed:11457893, PubMed:14576437, PubMed:14707092, PubMed:15908352, PubMed:16339555, PubMed:17911638, PubMed:17982087, PubMed:19620982, PubMed:19920210). Acts as a dynamin-like protein that binds to intracellular membranes and promotes remodeling and trafficking of those membranes (PubMed:19620982, PubMed:27098192). Required for clearance of acute protozoan and bacterial infections by interacting with autophagy and lysosome regulatory proteins, thereby promoting the fusion of phagosomes with lysosomes for efficient degradation of cargo including microbes (PubMed:11457893, PubMed:14576437, PubMed:14707092, PubMed:15607973, PubMed:15908352, PubMed:16339555, PubMed:17982087, PubMed:19620982, PubMed:19920210, PubMed:21757726, PubMed:22874556, PubMed:24751652, PubMed:32453761). Regulates selective autophagy, including xenophagy and mitophagy, both directly and indirectly (PubMed:15607973, PubMed:21757726). Directly regulates autophagy by acting as a molecular adapter that promotes the coassembly of the core autophagy machinery to mediate antimicrobial defense: Irgm1 (1) activates AMPK, which in turn phosphorylates ULK1 and BECN1 to induce autophagy, (2) promotes the coassembly of ULK1 and BECN1, enhancing BECN1-interacting partners and (3) influences the composition of the BECN1 complex, by competing with the negative regulators BCL2 and RUBCN, to trigger autophagy (By similarity). Also activates autophagy by promoting recruitment of STX17 to autophagosomes (By similarity). In collaboration with ATG8 proteins, regulate lysosomal biogenesis, a fundamental process for any autophagic pathway, by promoting TFEB dephosphorylation (By similarity). Also modulates autophagy by assisting with autophagosome formation and preventing lysosomal deacidification (PubMed:21757726). Regulates autophagy by affecting mitochondrial fusion and fission (PubMed:24751652). Also involved in M1 macrophage activation for the production of proinflammatory cytokines (PubMed:15908352, PubMed:27439214, PubMed:27443879). While activating autophagy, acts as a key negative regulator of the inflammatory and interferon responses both by (1) promoting mitophagy and (2) mediating autophagy-dependent degradation of effectors of the inflammatory response (PubMed:30612879, PubMed:33510463, PubMed:34467632). Promotes degradation of damaged and IFNG/IFN-gamma-stressed mitochondria via mitophagy, preventing cytosolic release of ligands that activate inflammation (PubMed:32715615, PubMed:33510463). Negatively regulates interferon-signaling in hematopoietic stem cells, preserving hematopoietic stem cell number and function (PubMed:18371424, PubMed:21633090). Promotes expansion of activated CD4(+) T-cells by inhibiting IFNG/IFN-gamma signaling, thereby preventing Ifng-mediated cell death of CD4(+) T-cells (PubMed:18806793). Acts as a suppressor of inflammation by promoting recruitment of inflammation effectors, such as CGAS, RIGI/RIG-I and NLRP3, to autophagosome membranes, leading to their SQSTM1/p62-dependent autophagic degradation (By similarity). Also directly inhibits assembly of the NLRP3 inflammasome by preventing the association between NLRP3 and PYCARD (By similarity). Acts as a negative regulator of antiviral innate immune response by suppressing the RIPK2-dependent pro-inflammatory response: mediates recruitment of RIPosomes, composed of RIPK2 and NOD1 or NOD2, to autophagosome membranes, promoting their SQSTM1/p62-dependent autophagic degradation (By similarity).</text>
</comment>
<comment type="catalytic activity">
    <reaction evidence="15">
        <text>GTP + H2O = GDP + phosphate + H(+)</text>
        <dbReference type="Rhea" id="RHEA:19669"/>
        <dbReference type="ChEBI" id="CHEBI:15377"/>
        <dbReference type="ChEBI" id="CHEBI:15378"/>
        <dbReference type="ChEBI" id="CHEBI:37565"/>
        <dbReference type="ChEBI" id="CHEBI:43474"/>
        <dbReference type="ChEBI" id="CHEBI:58189"/>
    </reaction>
    <physiologicalReaction direction="left-to-right" evidence="15">
        <dbReference type="Rhea" id="RHEA:19670"/>
    </physiologicalReaction>
</comment>
<comment type="subunit">
    <text evidence="1 15">Interacts with ULK1; promoting the coassembly of ULK1 and BECN1. Interacts with BECN1; enhancing BECN1-interacting partners and influencing the composition of the BECN1 complex. Interacts with ATG16L1. Interacts with NOD2; promoting Irgm1 'Lys-63'-linked polyubiquitination, which is required for interactions with the core autophagy factors (By similarity). Interacts with STX17; promoting STX17 recruitment to autophagosomes (By similarity). Interacts with ATG8 proteins (GABARAP, GABARAPL1, GABARAPL2, MAP1LC3A, MAP1LC3B and MAP1LC3C); promoting STX17 recruitment to autophagosomes (By similarity). Interacts with TFEB; promoting association between TFEB and PPP3CB and TFEB dephosphorylation (By similarity). Interacts with PPP3CB; promoting association between TFEB and PPP3CB and TFEB dephosphorylation (By similarity). Interacts with NLRP3; preventing NLRP3 inflammasome assembly and promoting SQSTM1/p62-dependent autophagic degradation of NLRP3 (By similarity). Interacts with CGAS; promoting SQSTM1/p62-dependent autophagic degradation of CGAS (By similarity). Interacts with RIGI/RIG-I; promoting SQSTM1/p62-dependent autophagic degradation of RIGI/RIG-I (By similarity). Interacts with NOD1; promoting SQSTM1/p62-dependent autophagic degradation of RIGI/RIG-I (By similarity). Interacts with NOD2; promoting SQSTM1/p62-dependent autophagic degradation of RIGI/RIG-I (By similarity). Interacts with RIPK2; promoting SQSTM1/p62-dependent autophagic degradation of RIGI/RIG-I (By similarity). Interacts with PIK3CA (PubMed:19620982).</text>
</comment>
<comment type="subcellular location">
    <subcellularLocation>
        <location evidence="7 9 17 22">Golgi apparatus membrane</location>
    </subcellularLocation>
    <subcellularLocation>
        <location evidence="7">Cell membrane</location>
    </subcellularLocation>
    <subcellularLocation>
        <location evidence="7 15">Cytoplasmic vesicle</location>
        <location evidence="7 15">Phagosome membrane</location>
    </subcellularLocation>
    <subcellularLocation>
        <location evidence="7">Cytoplasmic vesicle</location>
        <location evidence="7">Autophagosome membrane</location>
    </subcellularLocation>
    <subcellularLocation>
        <location evidence="12 17 23">Lysosome membrane</location>
    </subcellularLocation>
    <subcellularLocation>
        <location evidence="17">Late endosome membrane</location>
    </subcellularLocation>
    <subcellularLocation>
        <location evidence="22">Mitochondrion membrane</location>
    </subcellularLocation>
    <subcellularLocation>
        <location evidence="21">Lipid droplet</location>
    </subcellularLocation>
    <subcellularLocation>
        <location evidence="7">Cell projection</location>
        <location evidence="7">Phagocytic cup</location>
    </subcellularLocation>
    <text evidence="7 12 17 21">Behaves like an integral membrane protein (PubMed:15294976). Recruited to the plasma membrane around forming phagocytic cups, it remains associated with maturing phagosomes (PubMed:15294976). Association with phagosomes is dependent on nucleotide-binding but is IFNG-independent (PubMed:15294976). Also detected in late endosomes and lysosomes: lysosomal localization is IFN-gamma-induced during bacterial infections such as S.typhimurium infection (PubMed:17982087, PubMed:20072621). Associates with lipid droplets and 'self' cytoplasmic vacuoles, while it does not coat 'non-self' pathogen-containing vacuoles (PubMed:23785284).</text>
</comment>
<comment type="alternative products">
    <event type="alternative splicing"/>
    <isoform>
        <id>Q60766-1</id>
        <name>1</name>
        <sequence type="displayed"/>
    </isoform>
    <isoform>
        <id>Q60766-2</id>
        <name>2</name>
        <sequence type="described" ref="VSP_032384"/>
    </isoform>
</comment>
<comment type="tissue specificity">
    <text evidence="5">Expressed in lung and primary macrophages.</text>
</comment>
<comment type="induction">
    <text evidence="4 5 6 7 10 11 35">Up-regulated by LPS and IFNG (at protein level) (PubMed:11457893, PubMed:14576437, PubMed:15294976, PubMed:17911638, PubMed:7561525). Up-regulated upon infection by various pathogens including T.cruzi, T.gondii, L.monocytogenes, M.tuberculosis and murine cytomegalovirus (PubMed:14707092, PubMed:16339555).</text>
</comment>
<comment type="domain">
    <text evidence="15">The alpha-K amphipathic helix mediates targeting to the phagosome membrane via binding to phosphatidylinositol-3,4-bisphosphate (PtdIns(3,4)P2) and phosphatidylinositol-3,4,5-trisphosphate (PtdIns(3,4,5)P3).</text>
</comment>
<comment type="PTM">
    <text evidence="22">Palmitoylated on C-terminal Cys residues (PubMed:24751652). Palmitoylation, together with the alpha-K amphipathic helix, which binds phosphatidylinositol, mediate binding to membranes (PubMed:24751652).</text>
</comment>
<comment type="PTM">
    <text evidence="1 33">Ubiquitinated via 'Lys-63'-linked polyubiquitination in a NOD2-dependent process. 'Lys-63'-linked polyubiquitination is required for interactions with the core autophagy factors (By similarity). Ubiquitination at Lys-270 by the DCX(WDR77) complex, also named CLR4(WDR77) complex, in intestinal cells, leading to its degradation by the proteasome (PubMed:35197566).</text>
</comment>
<comment type="disruption phenotype">
    <text evidence="4 5 13 14 26 27 28 29 30 31 32 34">Mice do not show obvious abnormalities, but are more susceptible to infection by S.typhimurium, T.cruzi, T.gondii, L.monocytogenes, C.rodentium and M.tuberculosis (PubMed:11457893, PubMed:14576437, PubMed:32453761). Upon infection, alterations of blood elements occur including lymphopenia, anemia, and thrombocytopenia (PubMed:11457893, PubMed:14576437, PubMed:18371424). Mice become anemic and neutropenic as a result of chronic infection, and their hematopoietic stem cells are defective in the ability to reconstitute the blood of a Bone marrow-depleted host (PubMed:18371424). Mice display impaired expansion of activated CD4(+) T-cell population: defects are caused by Infg-mediated cell death of CD4(+) T-cells (PubMed:18806793). Mice also show increased inflammation with autoimmune features (PubMed:28154172, PubMed:28814662, PubMed:30612879, PubMed:32715615, PubMed:33510463). Macrophages show an increased production of proinflammatory cytokines associated with marked metabolic changes, characterized by increased glycolysis and an accumulation of long chain acylcarnitines (PubMed:28154172). Mice display autoimmune disorder reminiscent of Sjogren's syndrome, characterized by up-regulation of type I interferons (PubMed:28814662). Type I interferonopathy, characterized by up-regulation of type I interferons, is caused by activation of inflammation effectors, such as CGAS and NLRP3 (PubMed:30612879, PubMed:32715615, PubMed:33510463). Mice show an increased antiviral innate immune response and are highly resistant to chikungunya virus (CHIKV) infection (PubMed:34467632). Mice lacking both Irgm1 and Igtp/Irgm3 display resistance to Mycobacterium tuberculosis infection compared to Irgm1 mice that are highly susceptible to infection (PubMed:36629440). Mice lacking Irgm1, Irgm2 and Igtp/Irgm3 (panIrgm mice) show resistance against M.tuberculosis one month post-infection; then, panIrgm mice display higher bacterial burden and altered cytokine during late stage of infection, leading to increased mortality (PubMed:36629440).</text>
</comment>
<comment type="similarity">
    <text evidence="3">Belongs to the TRAFAC class dynamin-like GTPase superfamily. IRG family.</text>
</comment>
<reference key="1">
    <citation type="journal article" date="1995" name="J. Leukoc. Biol.">
        <title>Identification of an endotoxin and IFN-inducible cDNA: possible identification of a novel protein family.</title>
        <authorList>
            <person name="Sorace J.M."/>
            <person name="Johnson R.J."/>
            <person name="Howard D.L."/>
            <person name="Drysdale B.E."/>
        </authorList>
    </citation>
    <scope>NUCLEOTIDE SEQUENCE [MRNA] (ISOFORM 1)</scope>
    <scope>INDUCTION BY LPS AND IFNG</scope>
    <source>
        <strain>BALB/cJ</strain>
    </source>
</reference>
<reference key="2">
    <citation type="journal article" date="2005" name="Science">
        <title>The transcriptional landscape of the mammalian genome.</title>
        <authorList>
            <person name="Carninci P."/>
            <person name="Kasukawa T."/>
            <person name="Katayama S."/>
            <person name="Gough J."/>
            <person name="Frith M.C."/>
            <person name="Maeda N."/>
            <person name="Oyama R."/>
            <person name="Ravasi T."/>
            <person name="Lenhard B."/>
            <person name="Wells C."/>
            <person name="Kodzius R."/>
            <person name="Shimokawa K."/>
            <person name="Bajic V.B."/>
            <person name="Brenner S.E."/>
            <person name="Batalov S."/>
            <person name="Forrest A.R."/>
            <person name="Zavolan M."/>
            <person name="Davis M.J."/>
            <person name="Wilming L.G."/>
            <person name="Aidinis V."/>
            <person name="Allen J.E."/>
            <person name="Ambesi-Impiombato A."/>
            <person name="Apweiler R."/>
            <person name="Aturaliya R.N."/>
            <person name="Bailey T.L."/>
            <person name="Bansal M."/>
            <person name="Baxter L."/>
            <person name="Beisel K.W."/>
            <person name="Bersano T."/>
            <person name="Bono H."/>
            <person name="Chalk A.M."/>
            <person name="Chiu K.P."/>
            <person name="Choudhary V."/>
            <person name="Christoffels A."/>
            <person name="Clutterbuck D.R."/>
            <person name="Crowe M.L."/>
            <person name="Dalla E."/>
            <person name="Dalrymple B.P."/>
            <person name="de Bono B."/>
            <person name="Della Gatta G."/>
            <person name="di Bernardo D."/>
            <person name="Down T."/>
            <person name="Engstrom P."/>
            <person name="Fagiolini M."/>
            <person name="Faulkner G."/>
            <person name="Fletcher C.F."/>
            <person name="Fukushima T."/>
            <person name="Furuno M."/>
            <person name="Futaki S."/>
            <person name="Gariboldi M."/>
            <person name="Georgii-Hemming P."/>
            <person name="Gingeras T.R."/>
            <person name="Gojobori T."/>
            <person name="Green R.E."/>
            <person name="Gustincich S."/>
            <person name="Harbers M."/>
            <person name="Hayashi Y."/>
            <person name="Hensch T.K."/>
            <person name="Hirokawa N."/>
            <person name="Hill D."/>
            <person name="Huminiecki L."/>
            <person name="Iacono M."/>
            <person name="Ikeo K."/>
            <person name="Iwama A."/>
            <person name="Ishikawa T."/>
            <person name="Jakt M."/>
            <person name="Kanapin A."/>
            <person name="Katoh M."/>
            <person name="Kawasawa Y."/>
            <person name="Kelso J."/>
            <person name="Kitamura H."/>
            <person name="Kitano H."/>
            <person name="Kollias G."/>
            <person name="Krishnan S.P."/>
            <person name="Kruger A."/>
            <person name="Kummerfeld S.K."/>
            <person name="Kurochkin I.V."/>
            <person name="Lareau L.F."/>
            <person name="Lazarevic D."/>
            <person name="Lipovich L."/>
            <person name="Liu J."/>
            <person name="Liuni S."/>
            <person name="McWilliam S."/>
            <person name="Madan Babu M."/>
            <person name="Madera M."/>
            <person name="Marchionni L."/>
            <person name="Matsuda H."/>
            <person name="Matsuzawa S."/>
            <person name="Miki H."/>
            <person name="Mignone F."/>
            <person name="Miyake S."/>
            <person name="Morris K."/>
            <person name="Mottagui-Tabar S."/>
            <person name="Mulder N."/>
            <person name="Nakano N."/>
            <person name="Nakauchi H."/>
            <person name="Ng P."/>
            <person name="Nilsson R."/>
            <person name="Nishiguchi S."/>
            <person name="Nishikawa S."/>
            <person name="Nori F."/>
            <person name="Ohara O."/>
            <person name="Okazaki Y."/>
            <person name="Orlando V."/>
            <person name="Pang K.C."/>
            <person name="Pavan W.J."/>
            <person name="Pavesi G."/>
            <person name="Pesole G."/>
            <person name="Petrovsky N."/>
            <person name="Piazza S."/>
            <person name="Reed J."/>
            <person name="Reid J.F."/>
            <person name="Ring B.Z."/>
            <person name="Ringwald M."/>
            <person name="Rost B."/>
            <person name="Ruan Y."/>
            <person name="Salzberg S.L."/>
            <person name="Sandelin A."/>
            <person name="Schneider C."/>
            <person name="Schoenbach C."/>
            <person name="Sekiguchi K."/>
            <person name="Semple C.A."/>
            <person name="Seno S."/>
            <person name="Sessa L."/>
            <person name="Sheng Y."/>
            <person name="Shibata Y."/>
            <person name="Shimada H."/>
            <person name="Shimada K."/>
            <person name="Silva D."/>
            <person name="Sinclair B."/>
            <person name="Sperling S."/>
            <person name="Stupka E."/>
            <person name="Sugiura K."/>
            <person name="Sultana R."/>
            <person name="Takenaka Y."/>
            <person name="Taki K."/>
            <person name="Tammoja K."/>
            <person name="Tan S.L."/>
            <person name="Tang S."/>
            <person name="Taylor M.S."/>
            <person name="Tegner J."/>
            <person name="Teichmann S.A."/>
            <person name="Ueda H.R."/>
            <person name="van Nimwegen E."/>
            <person name="Verardo R."/>
            <person name="Wei C.L."/>
            <person name="Yagi K."/>
            <person name="Yamanishi H."/>
            <person name="Zabarovsky E."/>
            <person name="Zhu S."/>
            <person name="Zimmer A."/>
            <person name="Hide W."/>
            <person name="Bult C."/>
            <person name="Grimmond S.M."/>
            <person name="Teasdale R.D."/>
            <person name="Liu E.T."/>
            <person name="Brusic V."/>
            <person name="Quackenbush J."/>
            <person name="Wahlestedt C."/>
            <person name="Mattick J.S."/>
            <person name="Hume D.A."/>
            <person name="Kai C."/>
            <person name="Sasaki D."/>
            <person name="Tomaru Y."/>
            <person name="Fukuda S."/>
            <person name="Kanamori-Katayama M."/>
            <person name="Suzuki M."/>
            <person name="Aoki J."/>
            <person name="Arakawa T."/>
            <person name="Iida J."/>
            <person name="Imamura K."/>
            <person name="Itoh M."/>
            <person name="Kato T."/>
            <person name="Kawaji H."/>
            <person name="Kawagashira N."/>
            <person name="Kawashima T."/>
            <person name="Kojima M."/>
            <person name="Kondo S."/>
            <person name="Konno H."/>
            <person name="Nakano K."/>
            <person name="Ninomiya N."/>
            <person name="Nishio T."/>
            <person name="Okada M."/>
            <person name="Plessy C."/>
            <person name="Shibata K."/>
            <person name="Shiraki T."/>
            <person name="Suzuki S."/>
            <person name="Tagami M."/>
            <person name="Waki K."/>
            <person name="Watahiki A."/>
            <person name="Okamura-Oho Y."/>
            <person name="Suzuki H."/>
            <person name="Kawai J."/>
            <person name="Hayashizaki Y."/>
        </authorList>
    </citation>
    <scope>NUCLEOTIDE SEQUENCE [LARGE SCALE MRNA] (ISOFORMS 1 AND 2)</scope>
    <source>
        <strain>C57BL/6J</strain>
        <strain>NOD</strain>
        <tissue>Kidney</tissue>
        <tissue>Placenta</tissue>
        <tissue>Spleen</tissue>
    </source>
</reference>
<reference key="3">
    <citation type="journal article" date="2009" name="PLoS Biol.">
        <title>Lineage-specific biology revealed by a finished genome assembly of the mouse.</title>
        <authorList>
            <person name="Church D.M."/>
            <person name="Goodstadt L."/>
            <person name="Hillier L.W."/>
            <person name="Zody M.C."/>
            <person name="Goldstein S."/>
            <person name="She X."/>
            <person name="Bult C.J."/>
            <person name="Agarwala R."/>
            <person name="Cherry J.L."/>
            <person name="DiCuccio M."/>
            <person name="Hlavina W."/>
            <person name="Kapustin Y."/>
            <person name="Meric P."/>
            <person name="Maglott D."/>
            <person name="Birtle Z."/>
            <person name="Marques A.C."/>
            <person name="Graves T."/>
            <person name="Zhou S."/>
            <person name="Teague B."/>
            <person name="Potamousis K."/>
            <person name="Churas C."/>
            <person name="Place M."/>
            <person name="Herschleb J."/>
            <person name="Runnheim R."/>
            <person name="Forrest D."/>
            <person name="Amos-Landgraf J."/>
            <person name="Schwartz D.C."/>
            <person name="Cheng Z."/>
            <person name="Lindblad-Toh K."/>
            <person name="Eichler E.E."/>
            <person name="Ponting C.P."/>
        </authorList>
    </citation>
    <scope>NUCLEOTIDE SEQUENCE [LARGE SCALE GENOMIC DNA]</scope>
    <source>
        <strain>C57BL/6J</strain>
    </source>
</reference>
<reference key="4">
    <citation type="journal article" date="2004" name="Genome Res.">
        <title>The status, quality, and expansion of the NIH full-length cDNA project: the Mammalian Gene Collection (MGC).</title>
        <authorList>
            <consortium name="The MGC Project Team"/>
        </authorList>
    </citation>
    <scope>NUCLEOTIDE SEQUENCE [LARGE SCALE MRNA] (ISOFORM 1)</scope>
    <source>
        <tissue>Brain</tissue>
    </source>
</reference>
<reference key="5">
    <citation type="journal article" date="2001" name="J. Exp. Med.">
        <title>Inactivation of LRG-47 and IRG-47 reveals a family of interferon gamma-inducible genes with essential, pathogen-specific roles in resistance to infection.</title>
        <authorList>
            <person name="Collazo C.M."/>
            <person name="Yap G.S."/>
            <person name="Sempowski G.D."/>
            <person name="Lusby K.C."/>
            <person name="Tessarollo L."/>
            <person name="Vande Woude G.F."/>
            <person name="Sher A."/>
            <person name="Taylor G.A."/>
        </authorList>
    </citation>
    <scope>FUNCTION</scope>
    <scope>DISRUPTION PHENOTYPE</scope>
    <scope>INDUCTION</scope>
</reference>
<reference key="6">
    <citation type="journal article" date="2003" name="Science">
        <title>Immune control of tuberculosis by IFN-gamma-inducible LRG-47.</title>
        <authorList>
            <person name="MacMicking J.D."/>
            <person name="Taylor G.A."/>
            <person name="McKinney J.D."/>
        </authorList>
    </citation>
    <scope>FUNCTION</scope>
    <scope>DISRUPTION PHENOTYPE</scope>
    <scope>TISSUE SPECIFICITY</scope>
    <scope>INDUCTION</scope>
</reference>
<reference key="7">
    <citation type="journal article" date="2004" name="Cell">
        <title>Autophagy is a defense mechanism inhibiting BCG and Mycobacterium tuberculosis survival in infected macrophages.</title>
        <authorList>
            <person name="Gutierrez M.G."/>
            <person name="Master S.S."/>
            <person name="Singh S.B."/>
            <person name="Taylor G.A."/>
            <person name="Colombo M.I."/>
            <person name="Deretic V."/>
        </authorList>
    </citation>
    <scope>FUNCTION</scope>
</reference>
<reference key="8">
    <citation type="journal article" date="2004" name="J. Immunol.">
        <title>Mice deficient in LRG-47 display increased susceptibility to mycobacterial infection associated with the induction of lymphopenia.</title>
        <authorList>
            <person name="Feng C.G."/>
            <person name="Collazo-Custodio C.M."/>
            <person name="Eckhaus M."/>
            <person name="Hieny S."/>
            <person name="Belkaid Y."/>
            <person name="Elkins K."/>
            <person name="Jankovic D."/>
            <person name="Taylor G.A."/>
            <person name="Sher A."/>
        </authorList>
    </citation>
    <scope>FUNCTION</scope>
    <scope>INDUCTION</scope>
</reference>
<reference key="9">
    <citation type="journal article" date="2004" name="J. Immunol.">
        <title>Mechanisms regulating the positioning of mouse p47 resistance GTPases LRG-47 and IIGP1 on cellular membranes: retargeting to plasma membrane induced by phagocytosis.</title>
        <authorList>
            <person name="Martens S."/>
            <person name="Sabel K."/>
            <person name="Lange R."/>
            <person name="Uthaiah R."/>
            <person name="Wolf E."/>
            <person name="Howard J.C."/>
        </authorList>
    </citation>
    <scope>SUBCELLULAR LOCATION</scope>
    <scope>TOPOLOGY</scope>
    <scope>INDUCTION BY IFNG</scope>
    <scope>MUTAGENESIS OF SER-90</scope>
</reference>
<reference key="10">
    <citation type="journal article" date="2005" name="Infect. Immun.">
        <title>p47 GTPases regulate Toxoplasma gondii survival in activated macrophages.</title>
        <authorList>
            <person name="Butcher B.A."/>
            <person name="Greene R.I."/>
            <person name="Henry S.C."/>
            <person name="Annecharico K.L."/>
            <person name="Weinberg J.B."/>
            <person name="Denkers E.Y."/>
            <person name="Sher A."/>
            <person name="Taylor G.A."/>
        </authorList>
    </citation>
    <scope>FUNCTION</scope>
    <scope>SUBCELLULAR LOCATION</scope>
</reference>
<reference key="11">
    <citation type="journal article" date="2005" name="J. Immunol.">
        <title>Mice deficient in LRG-47 display enhanced susceptibility to Trypanosoma cruzi infection associated with defective hemopoiesis and intracellular control of parasite growth.</title>
        <authorList>
            <person name="Santiago H.C."/>
            <person name="Feng C.G."/>
            <person name="Bafica A."/>
            <person name="Roffe E."/>
            <person name="Arantes R.M."/>
            <person name="Cheever A."/>
            <person name="Taylor G.A."/>
            <person name="Vieira L.Q."/>
            <person name="Aliberti J."/>
            <person name="Gazzinelli R.T."/>
            <person name="Sher A."/>
        </authorList>
    </citation>
    <scope>FUNCTION</scope>
    <scope>INDUCTION</scope>
</reference>
<reference key="12">
    <citation type="journal article" date="2007" name="J. Immunol.">
        <title>The IFN-inducible GTPase LRG47 (Irgm1) negatively regulates TLR4-triggered proinflammatory cytokine production and prevents endotoxemia.</title>
        <authorList>
            <person name="Bafica A."/>
            <person name="Feng C.G."/>
            <person name="Santiago H.C."/>
            <person name="Aliberti J."/>
            <person name="Cheever A."/>
            <person name="Thomas K.E."/>
            <person name="Taylor G.A."/>
            <person name="Vogel S.N."/>
            <person name="Sher A."/>
        </authorList>
    </citation>
    <scope>FUNCTION</scope>
    <scope>INDUCTION BY LPS</scope>
</reference>
<reference key="13">
    <citation type="journal article" date="2007" name="J. Immunol.">
        <title>Impaired macrophage function underscores susceptibility to Salmonella in mice lacking Irgm1 (LRG-47).</title>
        <authorList>
            <person name="Henry S.C."/>
            <person name="Daniell X."/>
            <person name="Indaram M."/>
            <person name="Whitesides J.F."/>
            <person name="Sempowski G.D."/>
            <person name="Howell D."/>
            <person name="Oliver T."/>
            <person name="Taylor G.A."/>
        </authorList>
    </citation>
    <scope>FUNCTION</scope>
    <scope>SUBCELLULAR LOCATION</scope>
</reference>
<reference key="14">
    <citation type="journal article" date="2008" name="Cell Stem Cell">
        <title>The p47 GTPase Lrg-47 (Irgm1) links host defense and hematopoietic stem cell proliferation.</title>
        <authorList>
            <person name="Feng C.G."/>
            <person name="Weksberg D.C."/>
            <person name="Taylor G.A."/>
            <person name="Sher A."/>
            <person name="Goodell M.A."/>
        </authorList>
    </citation>
    <scope>FUNCTION</scope>
    <scope>DISRUPTION PHENOTYPE</scope>
</reference>
<reference key="15">
    <citation type="journal article" date="2008" name="Nat. Immunol.">
        <title>The immunity-related GTPase Irgm1 promotes the expansion of activated CD4+ T cell populations by preventing interferon-gamma-induced cell death.</title>
        <authorList>
            <person name="Feng C.G."/>
            <person name="Zheng L."/>
            <person name="Jankovic D."/>
            <person name="Bafica A."/>
            <person name="Cannons J.L."/>
            <person name="Watford W.T."/>
            <person name="Chaussabel D."/>
            <person name="Hieny S."/>
            <person name="Caspar P."/>
            <person name="Schwartzberg P.L."/>
            <person name="Lenardo M.J."/>
            <person name="Sher A."/>
        </authorList>
    </citation>
    <scope>FUNCTION</scope>
    <scope>DISRUPTION PHENOTYPE</scope>
</reference>
<reference key="16">
    <citation type="journal article" date="2009" name="Immunity">
        <title>The phagosomal proteome in interferon-gamma-activated macrophages.</title>
        <authorList>
            <person name="Trost M."/>
            <person name="English L."/>
            <person name="Lemieux S."/>
            <person name="Courcelles M."/>
            <person name="Desjardins M."/>
            <person name="Thibault P."/>
        </authorList>
    </citation>
    <scope>PHOSPHORYLATION [LARGE SCALE ANALYSIS] AT SER-202</scope>
    <scope>IDENTIFICATION BY MASS SPECTROMETRY [LARGE SCALE ANALYSIS]</scope>
</reference>
<reference key="17">
    <citation type="journal article" date="2009" name="Nat. Immunol.">
        <title>Targeting of the GTPase Irgm1 to the phagosomal membrane via PtdIns(3,4)P(2) and PtdIns(3,4,5)P(3) promotes immunity to mycobacteria.</title>
        <authorList>
            <person name="Tiwari S."/>
            <person name="Choi H.P."/>
            <person name="Matsuzawa T."/>
            <person name="Pypaert M."/>
            <person name="MacMicking J.D."/>
        </authorList>
    </citation>
    <scope>FUNCTION</scope>
    <scope>CATALYTIC ACTIVITY</scope>
    <scope>SUBCELLULAR LOCATION</scope>
    <scope>DOMAIN</scope>
    <scope>INTERACTION WITH PIK3CA</scope>
    <scope>MUTAGENESIS OF 350-LYS--CYS-356; 362-PHE--ARG-367 AND PHE-362</scope>
</reference>
<reference key="18">
    <citation type="journal article" date="2010" name="Cell">
        <title>A tissue-specific atlas of mouse protein phosphorylation and expression.</title>
        <authorList>
            <person name="Huttlin E.L."/>
            <person name="Jedrychowski M.P."/>
            <person name="Elias J.E."/>
            <person name="Goswami T."/>
            <person name="Rad R."/>
            <person name="Beausoleil S.A."/>
            <person name="Villen J."/>
            <person name="Haas W."/>
            <person name="Sowa M.E."/>
            <person name="Gygi S.P."/>
        </authorList>
    </citation>
    <scope>IDENTIFICATION BY MASS SPECTROMETRY [LARGE SCALE ANALYSIS]</scope>
    <source>
        <tissue>Heart</tissue>
        <tissue>Kidney</tissue>
        <tissue>Liver</tissue>
        <tissue>Lung</tissue>
        <tissue>Pancreas</tissue>
        <tissue>Spleen</tissue>
    </source>
</reference>
<reference key="19">
    <citation type="journal article" date="2010" name="J. Leukoc. Biol.">
        <title>Regulation of macrophage motility by Irgm1.</title>
        <authorList>
            <person name="Henry S.C."/>
            <person name="Traver M."/>
            <person name="Daniell X."/>
            <person name="Indaram M."/>
            <person name="Oliver T."/>
            <person name="Taylor G.A."/>
        </authorList>
    </citation>
    <scope>FUNCTION</scope>
</reference>
<reference key="20">
    <citation type="journal article" date="2010" name="PLoS ONE">
        <title>Localisation and mislocalisation of the interferon-inducible immunity-related GTPase, Irgm1 (LRG-47) in mouse cells.</title>
        <authorList>
            <person name="Zhao Y.O."/>
            <person name="Konen-Waisman S."/>
            <person name="Taylor G.A."/>
            <person name="Martens S."/>
            <person name="Howard J.C."/>
        </authorList>
    </citation>
    <scope>SUBCELLULAR LOCATION</scope>
    <scope>MUTAGENESIS OF CYS-356; ILE-358; VAL-359; ASN-360; PHE-362; PHE-363; ARG-364; LEU-365; LEU-366 AND ARG-367</scope>
</reference>
<reference key="21">
    <citation type="journal article" date="2011" name="Blood">
        <title>Irgm1 protects hematopoietic stem cells by negative regulation of IFN signaling.</title>
        <authorList>
            <person name="King K.Y."/>
            <person name="Baldridge M.T."/>
            <person name="Weksberg D.C."/>
            <person name="Chambers S.M."/>
            <person name="Lukov G.L."/>
            <person name="Wu S."/>
            <person name="Boles N.C."/>
            <person name="Jung S.Y."/>
            <person name="Qin J."/>
            <person name="Liu D."/>
            <person name="Songyang Z."/>
            <person name="Eissa N.T."/>
            <person name="Taylor G.A."/>
            <person name="Goodell M.A."/>
        </authorList>
    </citation>
    <scope>FUNCTION</scope>
</reference>
<reference key="22">
    <citation type="journal article" date="2011" name="J. Biol. Chem.">
        <title>Immunity-related GTPase M (IRGM) proteins influence the localization of guanylate-binding protein 2 (GBP2) by modulating macroautophagy.</title>
        <authorList>
            <person name="Traver M.K."/>
            <person name="Henry S.C."/>
            <person name="Cantillana V."/>
            <person name="Oliver T."/>
            <person name="Hunn J.P."/>
            <person name="Howard J.C."/>
            <person name="Beer S."/>
            <person name="Pfeffer K."/>
            <person name="Coers J."/>
            <person name="Taylor G.A."/>
        </authorList>
    </citation>
    <scope>FUNCTION</scope>
</reference>
<reference key="23">
    <citation type="journal article" date="2012" name="Autophagy">
        <title>Immune-related GTPase M (IRGM1) regulates neuronal autophagy in a mouse model of stroke.</title>
        <authorList>
            <person name="He S."/>
            <person name="Wang C."/>
            <person name="Dong H."/>
            <person name="Xia F."/>
            <person name="Zhou H."/>
            <person name="Jiang X."/>
            <person name="Pei C."/>
            <person name="Ren H."/>
            <person name="Li H."/>
            <person name="Li R."/>
            <person name="Xu H."/>
        </authorList>
    </citation>
    <scope>FUNCTION</scope>
</reference>
<reference key="24">
    <citation type="journal article" date="2013" name="PLoS Pathog.">
        <title>IRG and GBP host resistance factors target aberrant, 'non-self' vacuoles characterized by the missing of 'self' IRGM proteins.</title>
        <authorList>
            <person name="Haldar A.K."/>
            <person name="Saka H.A."/>
            <person name="Piro A.S."/>
            <person name="Dunn J.D."/>
            <person name="Henry S.C."/>
            <person name="Taylor G.A."/>
            <person name="Frickel E.M."/>
            <person name="Valdivia R.H."/>
            <person name="Coers J."/>
        </authorList>
    </citation>
    <scope>SUBCELLULAR LOCATION</scope>
</reference>
<reference key="25">
    <citation type="journal article" date="2014" name="PLoS ONE">
        <title>Palmitoylation of the immunity related GTPase, Irgm1: impact on membrane localization and ability to promote mitochondrial fission.</title>
        <authorList>
            <person name="Henry S.C."/>
            <person name="Schmidt E.A."/>
            <person name="Fessler M.B."/>
            <person name="Taylor G.A."/>
        </authorList>
    </citation>
    <scope>FUNCTION</scope>
    <scope>PALMITOYLATION</scope>
    <scope>SUBCELLULAR LOCATION</scope>
    <scope>MUTAGENESIS OF CYS-8; 257-CYS-CYS-258 AND 371-CYS--CYS-375</scope>
</reference>
<reference key="26">
    <citation type="journal article" date="2016" name="Atherosclerosis">
        <title>Irgm1 promotes M1 but not M2 macrophage polarization in atherosclerosis pathogenesis and development.</title>
        <authorList>
            <person name="Fang S."/>
            <person name="Xu Y."/>
            <person name="Zhang Y."/>
            <person name="Tian J."/>
            <person name="Li J."/>
            <person name="Li Z."/>
            <person name="He Z."/>
            <person name="Chai R."/>
            <person name="Liu F."/>
            <person name="Zhang T."/>
            <person name="Yang S."/>
            <person name="Pei C."/>
            <person name="Liu X."/>
            <person name="Lin P."/>
            <person name="Xu H."/>
            <person name="Yu B."/>
            <person name="Li H."/>
            <person name="Sun B."/>
        </authorList>
    </citation>
    <scope>FUNCTION</scope>
</reference>
<reference key="27">
    <citation type="journal article" date="2016" name="BMC Biol.">
        <title>Loss of the interferon-gamma-inducible regulatory immunity-related GTPase (IRG), Irgm1, causes activation of effector IRG proteins on lysosomes, damaging lysosomal function and predicting the dramatic susceptibility of Irgm1-deficient mice to infection.</title>
        <authorList>
            <person name="Maric-Biresev J."/>
            <person name="Hunn J.P."/>
            <person name="Krut O."/>
            <person name="Helms J.B."/>
            <person name="Martens S."/>
            <person name="Howard J.C."/>
        </authorList>
    </citation>
    <scope>FUNCTION</scope>
    <scope>SUBCELLULAR LOCATION</scope>
</reference>
<reference key="28">
    <citation type="journal article" date="2017" name="J. Biol. Chem.">
        <title>Metabolic alterations contribute to enhanced inflammatory cytokine production in Irgm1-deficient macrophages.</title>
        <authorList>
            <person name="Schmidt E.A."/>
            <person name="Fee B.E."/>
            <person name="Henry S.C."/>
            <person name="Nichols A.G."/>
            <person name="Shinohara M.L."/>
            <person name="Rathmell J.C."/>
            <person name="MacIver N.J."/>
            <person name="Coers J."/>
            <person name="Ilkayeva O.R."/>
            <person name="Koves T.R."/>
            <person name="Taylor G.A."/>
        </authorList>
    </citation>
    <scope>DISRUPTION PHENOTYPE</scope>
</reference>
<reference key="29">
    <citation type="journal article" date="2017" name="JCI Insight">
        <title>Irgm1 coordinately regulates autoimmunity and host defense at select mucosal surfaces.</title>
        <authorList>
            <person name="Azzam K.M."/>
            <person name="Madenspacher J.H."/>
            <person name="Cain D.W."/>
            <person name="Lai L."/>
            <person name="Gowdy K.M."/>
            <person name="Rai P."/>
            <person name="Janardhan K."/>
            <person name="Clayton N."/>
            <person name="Cunningham W."/>
            <person name="Jensen H."/>
            <person name="Patel P.S."/>
            <person name="Kearney J.F."/>
            <person name="Taylor G.A."/>
            <person name="Fessler M.B."/>
        </authorList>
    </citation>
    <scope>DISRUPTION PHENOTYPE</scope>
</reference>
<reference key="30">
    <citation type="journal article" date="2017" name="J. Leukoc. Biol.">
        <title>Irgm1 is required for the inflammatory function of M1 macrophage in early experimental autoimmune encephalomyelitis.</title>
        <authorList>
            <person name="Xu Y."/>
            <person name="He Z."/>
            <person name="Li Z."/>
            <person name="Fang S."/>
            <person name="Zhang Y."/>
            <person name="Wan C."/>
            <person name="Ma Y."/>
            <person name="Lin P."/>
            <person name="Liu C."/>
            <person name="Wang G."/>
            <person name="Li R."/>
            <person name="Zhu J."/>
            <person name="Li Y."/>
            <person name="Mu L."/>
            <person name="Zhang Y."/>
            <person name="Wang J."/>
            <person name="Kong Q."/>
            <person name="Li H."/>
            <person name="Sun B."/>
        </authorList>
    </citation>
    <scope>FUNCTION</scope>
</reference>
<reference key="31">
    <citation type="journal article" date="2019" name="Mol. Cell">
        <title>The Crohn's disease risk factor IRGM limits NLRP3 inflammasome activation by impeding its assembly and by mediating its selective autophagy.</title>
        <authorList>
            <person name="Mehto S."/>
            <person name="Jena K.K."/>
            <person name="Nath P."/>
            <person name="Chauhan S."/>
            <person name="Kolapalli S.P."/>
            <person name="Das S.K."/>
            <person name="Sahoo P.K."/>
            <person name="Jain A."/>
            <person name="Taylor G.A."/>
            <person name="Chauhan S."/>
        </authorList>
    </citation>
    <scope>FUNCTION</scope>
    <scope>DISRUPTION PHENOTYPE</scope>
</reference>
<reference key="32">
    <citation type="journal article" date="2020" name="EMBO Rep.">
        <title>Autoimmunity gene IRGM suppresses cGAS-STING and RIG-I-MAVS signaling to control interferon response.</title>
        <authorList>
            <person name="Jena K.K."/>
            <person name="Mehto S."/>
            <person name="Nath P."/>
            <person name="Chauhan N.R."/>
            <person name="Sahu R."/>
            <person name="Dhar K."/>
            <person name="Das S.K."/>
            <person name="Kolapalli S.P."/>
            <person name="Murmu K.C."/>
            <person name="Jain A."/>
            <person name="Krishna S."/>
            <person name="Sahoo B.S."/>
            <person name="Chattopadhyay S."/>
            <person name="Rusten T.E."/>
            <person name="Prasad P."/>
            <person name="Chauhan S."/>
            <person name="Chauhan S."/>
        </authorList>
    </citation>
    <scope>FUNCTION</scope>
    <scope>DISRUPTION PHENOTYPE</scope>
</reference>
<reference key="33">
    <citation type="journal article" date="2020" name="PLoS Pathog.">
        <title>Irgm1-deficiency leads to myeloid dysfunction in colon lamina propria and susceptibility to the intestinal pathogen Citrobacter rodentium.</title>
        <authorList>
            <person name="Taylor G.A."/>
            <person name="Huang H.I."/>
            <person name="Fee B.E."/>
            <person name="Youssef N."/>
            <person name="Jewell M.L."/>
            <person name="Cantillana V."/>
            <person name="Schoenborn A.A."/>
            <person name="Rogala A.R."/>
            <person name="Buckley A.F."/>
            <person name="Feng C.G."/>
            <person name="Vallance B.A."/>
            <person name="Gulati A.S."/>
            <person name="Hammer G.E."/>
        </authorList>
    </citation>
    <scope>FUNCTION</scope>
    <scope>DISRUPTION PHENOTYPE</scope>
</reference>
<reference key="34">
    <citation type="journal article" date="2021" name="EMBO Rep.">
        <title>Inhibition of IRGM establishes a robust antiviral immune state to restrict pathogenic viruses.</title>
        <authorList>
            <person name="Nath P."/>
            <person name="Chauhan N.R."/>
            <person name="Jena K.K."/>
            <person name="Datey A."/>
            <person name="Kumar N.D."/>
            <person name="Mehto S."/>
            <person name="De S."/>
            <person name="Nayak T.K."/>
            <person name="Priyadarsini S."/>
            <person name="Rout K."/>
            <person name="Bal R."/>
            <person name="Murmu K.C."/>
            <person name="Kalia M."/>
            <person name="Patnaik S."/>
            <person name="Prasad P."/>
            <person name="Reggiori F."/>
            <person name="Chattopadhyay S."/>
            <person name="Chauhan S."/>
        </authorList>
    </citation>
    <scope>FUNCTION</scope>
    <scope>DISRUPTION PHENOTYPE</scope>
</reference>
<reference key="35">
    <citation type="journal article" date="2021" name="Nat. Immunol.">
        <title>IRGM1 links mitochondrial quality control to autoimmunity.</title>
        <authorList>
            <person name="Rai P."/>
            <person name="Janardhan K.S."/>
            <person name="Meacham J."/>
            <person name="Madenspacher J.H."/>
            <person name="Lin W.C."/>
            <person name="Karmaus P.W.F."/>
            <person name="Martinez J."/>
            <person name="Li Q.Z."/>
            <person name="Yan M."/>
            <person name="Zeng J."/>
            <person name="Grinstaff M.W."/>
            <person name="Shirihai O.S."/>
            <person name="Taylor G.A."/>
            <person name="Fessler M.B."/>
        </authorList>
    </citation>
    <scope>FUNCTION</scope>
    <scope>DISRUPTION PHENOTYPE</scope>
</reference>
<reference key="36">
    <citation type="journal article" date="2022" name="Cell Death Differ.">
        <title>Cullin 4b-RING ubiquitin ligase targets IRGM1 to regulate Wnt signaling and intestinal homeostasis.</title>
        <authorList>
            <person name="Fan Y."/>
            <person name="Huo X."/>
            <person name="Guo B."/>
            <person name="Zhang X."/>
            <person name="Yang Y."/>
            <person name="Lian J."/>
            <person name="Meng X."/>
            <person name="Shao Y."/>
            <person name="Zou Y."/>
            <person name="Guo H."/>
            <person name="Wang H."/>
            <person name="Sun G."/>
            <person name="Dou H."/>
            <person name="Wang J."/>
            <person name="Shao C."/>
            <person name="Gong Y."/>
            <person name="Hu H."/>
        </authorList>
    </citation>
    <scope>UBIQUITINATION AT LYS-270</scope>
    <scope>MUTAGENESIS OF LYS-270; LYS-275 AND LYS-398</scope>
</reference>
<reference key="37">
    <citation type="journal article" date="2023" name="Infect. Immun.">
        <title>Differential requirement for IRGM proteins during Tuberculosis infection in mice.</title>
        <authorList>
            <person name="Wilburn K.M."/>
            <person name="Meade R.K."/>
            <person name="Heckenberg E.M."/>
            <person name="Dockterman J."/>
            <person name="Coers J."/>
            <person name="Sassetti C.M."/>
            <person name="Olive A.J."/>
            <person name="Smith C.M."/>
        </authorList>
    </citation>
    <scope>DISRUPTION PHENOTYPE</scope>
</reference>